<keyword id="KW-0028">Amino-acid biosynthesis</keyword>
<keyword id="KW-0100">Branched-chain amino acid biosynthesis</keyword>
<keyword id="KW-0903">Direct protein sequencing</keyword>
<keyword id="KW-0460">Magnesium</keyword>
<keyword id="KW-0479">Metal-binding</keyword>
<keyword id="KW-0521">NADP</keyword>
<keyword id="KW-0560">Oxidoreductase</keyword>
<keyword id="KW-1185">Reference proteome</keyword>
<comment type="function">
    <text evidence="1">Involved in the biosynthesis of branched-chain amino acids (BCAA). Catalyzes an alkyl-migration followed by a ketol-acid reduction of (S)-2-acetolactate (S2AL) to yield (R)-2,3-dihydroxy-isovalerate. In the isomerase reaction, S2AL is rearranged via a Mg-dependent methyl migration to produce 3-hydroxy-3-methyl-2-ketobutyrate (HMKB). In the reductase reaction, this 2-ketoacid undergoes a metal-dependent reduction by NADPH to yield (R)-2,3-dihydroxy-isovalerate.</text>
</comment>
<comment type="catalytic activity">
    <reaction evidence="1">
        <text>(2R)-2,3-dihydroxy-3-methylbutanoate + NADP(+) = (2S)-2-acetolactate + NADPH + H(+)</text>
        <dbReference type="Rhea" id="RHEA:22068"/>
        <dbReference type="ChEBI" id="CHEBI:15378"/>
        <dbReference type="ChEBI" id="CHEBI:49072"/>
        <dbReference type="ChEBI" id="CHEBI:57783"/>
        <dbReference type="ChEBI" id="CHEBI:58349"/>
        <dbReference type="ChEBI" id="CHEBI:58476"/>
        <dbReference type="EC" id="1.1.1.86"/>
    </reaction>
</comment>
<comment type="catalytic activity">
    <reaction evidence="1">
        <text>(2R,3R)-2,3-dihydroxy-3-methylpentanoate + NADP(+) = (S)-2-ethyl-2-hydroxy-3-oxobutanoate + NADPH + H(+)</text>
        <dbReference type="Rhea" id="RHEA:13493"/>
        <dbReference type="ChEBI" id="CHEBI:15378"/>
        <dbReference type="ChEBI" id="CHEBI:49256"/>
        <dbReference type="ChEBI" id="CHEBI:49258"/>
        <dbReference type="ChEBI" id="CHEBI:57783"/>
        <dbReference type="ChEBI" id="CHEBI:58349"/>
        <dbReference type="EC" id="1.1.1.86"/>
    </reaction>
</comment>
<comment type="cofactor">
    <cofactor evidence="1">
        <name>Mg(2+)</name>
        <dbReference type="ChEBI" id="CHEBI:18420"/>
    </cofactor>
    <text evidence="1">Binds 2 magnesium ions per subunit.</text>
</comment>
<comment type="pathway">
    <text evidence="1">Amino-acid biosynthesis; L-isoleucine biosynthesis; L-isoleucine from 2-oxobutanoate: step 2/4.</text>
</comment>
<comment type="pathway">
    <text evidence="1">Amino-acid biosynthesis; L-valine biosynthesis; L-valine from pyruvate: step 2/4.</text>
</comment>
<comment type="subunit">
    <text>Homooctamer.</text>
</comment>
<comment type="similarity">
    <text evidence="1">Belongs to the ketol-acid reductoisomerase family.</text>
</comment>
<comment type="caution">
    <text evidence="6">Was originally isolated as a glutamyl-tRNA reductase.</text>
</comment>
<comment type="sequence caution" evidence="5">
    <conflict type="erroneous initiation">
        <sequence resource="EMBL-CDS" id="BAA18666"/>
    </conflict>
</comment>
<protein>
    <recommendedName>
        <fullName evidence="1">Ketol-acid reductoisomerase (NADP(+))</fullName>
        <shortName evidence="1">KARI</shortName>
        <ecNumber evidence="1">1.1.1.86</ecNumber>
    </recommendedName>
    <alternativeName>
        <fullName evidence="1">Acetohydroxy-acid isomeroreductase</fullName>
        <shortName evidence="1">AHIR</shortName>
    </alternativeName>
    <alternativeName>
        <fullName evidence="1">Alpha-keto-beta-hydroxylacyl reductoisomerase</fullName>
    </alternativeName>
    <alternativeName>
        <fullName evidence="1">Ketol-acid reductoisomerase type 1</fullName>
    </alternativeName>
    <alternativeName>
        <fullName evidence="1">Ketol-acid reductoisomerase type I</fullName>
    </alternativeName>
</protein>
<proteinExistence type="evidence at protein level"/>
<organism>
    <name type="scientific">Synechocystis sp. (strain ATCC 27184 / PCC 6803 / Kazusa)</name>
    <dbReference type="NCBI Taxonomy" id="1111708"/>
    <lineage>
        <taxon>Bacteria</taxon>
        <taxon>Bacillati</taxon>
        <taxon>Cyanobacteriota</taxon>
        <taxon>Cyanophyceae</taxon>
        <taxon>Synechococcales</taxon>
        <taxon>Merismopediaceae</taxon>
        <taxon>Synechocystis</taxon>
    </lineage>
</organism>
<gene>
    <name evidence="1" type="primary">ilvC</name>
    <name type="ordered locus">sll1363</name>
</gene>
<reference key="1">
    <citation type="journal article" date="1996" name="DNA Res.">
        <title>Sequence analysis of the genome of the unicellular cyanobacterium Synechocystis sp. strain PCC6803. II. Sequence determination of the entire genome and assignment of potential protein-coding regions.</title>
        <authorList>
            <person name="Kaneko T."/>
            <person name="Sato S."/>
            <person name="Kotani H."/>
            <person name="Tanaka A."/>
            <person name="Asamizu E."/>
            <person name="Nakamura Y."/>
            <person name="Miyajima N."/>
            <person name="Hirosawa M."/>
            <person name="Sugiura M."/>
            <person name="Sasamoto S."/>
            <person name="Kimura T."/>
            <person name="Hosouchi T."/>
            <person name="Matsuno A."/>
            <person name="Muraki A."/>
            <person name="Nakazaki N."/>
            <person name="Naruo K."/>
            <person name="Okumura S."/>
            <person name="Shimpo S."/>
            <person name="Takeuchi C."/>
            <person name="Wada T."/>
            <person name="Watanabe A."/>
            <person name="Yamada M."/>
            <person name="Yasuda M."/>
            <person name="Tabata S."/>
        </authorList>
    </citation>
    <scope>NUCLEOTIDE SEQUENCE [LARGE SCALE GENOMIC DNA]</scope>
    <source>
        <strain>ATCC 27184 / PCC 6803 / Kazusa</strain>
    </source>
</reference>
<reference key="2">
    <citation type="journal article" date="1991" name="J. Biol. Chem.">
        <title>Purification of glutamyl-tRNA reductase from Synechocystis sp. PCC 6803.</title>
        <authorList>
            <person name="Rieble S."/>
            <person name="Beale S.I."/>
        </authorList>
    </citation>
    <scope>PROTEIN SEQUENCE OF 2-43</scope>
</reference>
<sequence>MARMYYDQDANLDLLAGKTVAIIGYGSQGHAHALNLKDSGVNVVVGLYSGSKSVAKAEGAGLKVLSVAEAAKAADLIMILLPDEVQKTVYEAEIAPNLVAGNVLLFAHGFNINFAQIVPPADVDVVMAAPKGPGHLVRRTYEQGQGVPALFAVYQDASGQARDYAMAYAKGIGGTRAGILETTFREETETDLFGEQVVLCGGLTALIKAGFDTLVEAGYQPELAYFECLHEVKLIVDLIVEGGLAKMRDSISNTAEYGDLTRGPRIVTEETKAEMRQILDEIQSGQFAREFVLENQAGKPGFTAMRRRESEELIEEVGKDLRAMFSWLKDR</sequence>
<evidence type="ECO:0000255" key="1">
    <source>
        <dbReference type="HAMAP-Rule" id="MF_00435"/>
    </source>
</evidence>
<evidence type="ECO:0000255" key="2">
    <source>
        <dbReference type="PROSITE-ProRule" id="PRU01197"/>
    </source>
</evidence>
<evidence type="ECO:0000255" key="3">
    <source>
        <dbReference type="PROSITE-ProRule" id="PRU01198"/>
    </source>
</evidence>
<evidence type="ECO:0000269" key="4">
    <source>
    </source>
</evidence>
<evidence type="ECO:0000305" key="5"/>
<evidence type="ECO:0000305" key="6">
    <source>
    </source>
</evidence>
<name>ILVC_SYNY3</name>
<accession>P29107</accession>
<accession>P74559</accession>
<dbReference type="EC" id="1.1.1.86" evidence="1"/>
<dbReference type="EMBL" id="BA000022">
    <property type="protein sequence ID" value="BAA18666.1"/>
    <property type="status" value="ALT_INIT"/>
    <property type="molecule type" value="Genomic_DNA"/>
</dbReference>
<dbReference type="PIR" id="S76754">
    <property type="entry name" value="A47037"/>
</dbReference>
<dbReference type="SMR" id="P29107"/>
<dbReference type="DIP" id="DIP-48805N"/>
<dbReference type="FunCoup" id="P29107">
    <property type="interactions" value="433"/>
</dbReference>
<dbReference type="IntAct" id="P29107">
    <property type="interactions" value="2"/>
</dbReference>
<dbReference type="STRING" id="1148.gene:10500432"/>
<dbReference type="PaxDb" id="1148-1653755"/>
<dbReference type="EnsemblBacteria" id="BAA18666">
    <property type="protein sequence ID" value="BAA18666"/>
    <property type="gene ID" value="BAA18666"/>
</dbReference>
<dbReference type="KEGG" id="syn:sll1363"/>
<dbReference type="eggNOG" id="COG0059">
    <property type="taxonomic scope" value="Bacteria"/>
</dbReference>
<dbReference type="InParanoid" id="P29107"/>
<dbReference type="PhylomeDB" id="P29107"/>
<dbReference type="UniPathway" id="UPA00047">
    <property type="reaction ID" value="UER00056"/>
</dbReference>
<dbReference type="UniPathway" id="UPA00049">
    <property type="reaction ID" value="UER00060"/>
</dbReference>
<dbReference type="Proteomes" id="UP000001425">
    <property type="component" value="Chromosome"/>
</dbReference>
<dbReference type="GO" id="GO:0005829">
    <property type="term" value="C:cytosol"/>
    <property type="evidence" value="ECO:0000318"/>
    <property type="project" value="GO_Central"/>
</dbReference>
<dbReference type="GO" id="GO:0004455">
    <property type="term" value="F:ketol-acid reductoisomerase activity"/>
    <property type="evidence" value="ECO:0000318"/>
    <property type="project" value="GO_Central"/>
</dbReference>
<dbReference type="GO" id="GO:0000287">
    <property type="term" value="F:magnesium ion binding"/>
    <property type="evidence" value="ECO:0007669"/>
    <property type="project" value="UniProtKB-UniRule"/>
</dbReference>
<dbReference type="GO" id="GO:0050661">
    <property type="term" value="F:NADP binding"/>
    <property type="evidence" value="ECO:0007669"/>
    <property type="project" value="InterPro"/>
</dbReference>
<dbReference type="GO" id="GO:0009097">
    <property type="term" value="P:isoleucine biosynthetic process"/>
    <property type="evidence" value="ECO:0000318"/>
    <property type="project" value="GO_Central"/>
</dbReference>
<dbReference type="GO" id="GO:0009099">
    <property type="term" value="P:L-valine biosynthetic process"/>
    <property type="evidence" value="ECO:0000318"/>
    <property type="project" value="GO_Central"/>
</dbReference>
<dbReference type="FunFam" id="3.40.50.720:FF:000023">
    <property type="entry name" value="Ketol-acid reductoisomerase (NADP(+))"/>
    <property type="match status" value="1"/>
</dbReference>
<dbReference type="Gene3D" id="6.10.240.10">
    <property type="match status" value="1"/>
</dbReference>
<dbReference type="Gene3D" id="3.40.50.720">
    <property type="entry name" value="NAD(P)-binding Rossmann-like Domain"/>
    <property type="match status" value="1"/>
</dbReference>
<dbReference type="HAMAP" id="MF_00435">
    <property type="entry name" value="IlvC"/>
    <property type="match status" value="1"/>
</dbReference>
<dbReference type="InterPro" id="IPR008927">
    <property type="entry name" value="6-PGluconate_DH-like_C_sf"/>
</dbReference>
<dbReference type="InterPro" id="IPR013023">
    <property type="entry name" value="KARI"/>
</dbReference>
<dbReference type="InterPro" id="IPR000506">
    <property type="entry name" value="KARI_C"/>
</dbReference>
<dbReference type="InterPro" id="IPR013116">
    <property type="entry name" value="KARI_N"/>
</dbReference>
<dbReference type="InterPro" id="IPR014359">
    <property type="entry name" value="KARI_prok"/>
</dbReference>
<dbReference type="InterPro" id="IPR036291">
    <property type="entry name" value="NAD(P)-bd_dom_sf"/>
</dbReference>
<dbReference type="NCBIfam" id="TIGR00465">
    <property type="entry name" value="ilvC"/>
    <property type="match status" value="1"/>
</dbReference>
<dbReference type="NCBIfam" id="NF004017">
    <property type="entry name" value="PRK05479.1"/>
    <property type="match status" value="1"/>
</dbReference>
<dbReference type="NCBIfam" id="NF009940">
    <property type="entry name" value="PRK13403.1"/>
    <property type="match status" value="1"/>
</dbReference>
<dbReference type="PANTHER" id="PTHR21371">
    <property type="entry name" value="KETOL-ACID REDUCTOISOMERASE, MITOCHONDRIAL"/>
    <property type="match status" value="1"/>
</dbReference>
<dbReference type="PANTHER" id="PTHR21371:SF1">
    <property type="entry name" value="KETOL-ACID REDUCTOISOMERASE, MITOCHONDRIAL"/>
    <property type="match status" value="1"/>
</dbReference>
<dbReference type="Pfam" id="PF01450">
    <property type="entry name" value="KARI_C"/>
    <property type="match status" value="1"/>
</dbReference>
<dbReference type="Pfam" id="PF07991">
    <property type="entry name" value="KARI_N"/>
    <property type="match status" value="1"/>
</dbReference>
<dbReference type="PIRSF" id="PIRSF000116">
    <property type="entry name" value="IlvC_gammaproteo"/>
    <property type="match status" value="1"/>
</dbReference>
<dbReference type="SUPFAM" id="SSF48179">
    <property type="entry name" value="6-phosphogluconate dehydrogenase C-terminal domain-like"/>
    <property type="match status" value="1"/>
</dbReference>
<dbReference type="SUPFAM" id="SSF51735">
    <property type="entry name" value="NAD(P)-binding Rossmann-fold domains"/>
    <property type="match status" value="1"/>
</dbReference>
<dbReference type="PROSITE" id="PS51851">
    <property type="entry name" value="KARI_C"/>
    <property type="match status" value="1"/>
</dbReference>
<dbReference type="PROSITE" id="PS51850">
    <property type="entry name" value="KARI_N"/>
    <property type="match status" value="1"/>
</dbReference>
<feature type="initiator methionine" description="Removed" evidence="4">
    <location>
        <position position="1"/>
    </location>
</feature>
<feature type="chain" id="PRO_0000151372" description="Ketol-acid reductoisomerase (NADP(+))">
    <location>
        <begin position="2"/>
        <end position="331"/>
    </location>
</feature>
<feature type="domain" description="KARI N-terminal Rossmann" evidence="2">
    <location>
        <begin position="2"/>
        <end position="182"/>
    </location>
</feature>
<feature type="domain" description="KARI C-terminal knotted" evidence="3">
    <location>
        <begin position="183"/>
        <end position="328"/>
    </location>
</feature>
<feature type="active site" evidence="1">
    <location>
        <position position="108"/>
    </location>
</feature>
<feature type="binding site" evidence="1">
    <location>
        <begin position="25"/>
        <end position="28"/>
    </location>
    <ligand>
        <name>NADP(+)</name>
        <dbReference type="ChEBI" id="CHEBI:58349"/>
    </ligand>
</feature>
<feature type="binding site" evidence="1">
    <location>
        <position position="51"/>
    </location>
    <ligand>
        <name>NADP(+)</name>
        <dbReference type="ChEBI" id="CHEBI:58349"/>
    </ligand>
</feature>
<feature type="binding site" evidence="1">
    <location>
        <position position="53"/>
    </location>
    <ligand>
        <name>NADP(+)</name>
        <dbReference type="ChEBI" id="CHEBI:58349"/>
    </ligand>
</feature>
<feature type="binding site" evidence="1">
    <location>
        <begin position="83"/>
        <end position="86"/>
    </location>
    <ligand>
        <name>NADP(+)</name>
        <dbReference type="ChEBI" id="CHEBI:58349"/>
    </ligand>
</feature>
<feature type="binding site" evidence="1">
    <location>
        <position position="134"/>
    </location>
    <ligand>
        <name>NADP(+)</name>
        <dbReference type="ChEBI" id="CHEBI:58349"/>
    </ligand>
</feature>
<feature type="binding site" evidence="1">
    <location>
        <position position="191"/>
    </location>
    <ligand>
        <name>Mg(2+)</name>
        <dbReference type="ChEBI" id="CHEBI:18420"/>
        <label>1</label>
    </ligand>
</feature>
<feature type="binding site" evidence="1">
    <location>
        <position position="191"/>
    </location>
    <ligand>
        <name>Mg(2+)</name>
        <dbReference type="ChEBI" id="CHEBI:18420"/>
        <label>2</label>
    </ligand>
</feature>
<feature type="binding site" evidence="1">
    <location>
        <position position="195"/>
    </location>
    <ligand>
        <name>Mg(2+)</name>
        <dbReference type="ChEBI" id="CHEBI:18420"/>
        <label>1</label>
    </ligand>
</feature>
<feature type="binding site" evidence="1">
    <location>
        <position position="227"/>
    </location>
    <ligand>
        <name>Mg(2+)</name>
        <dbReference type="ChEBI" id="CHEBI:18420"/>
        <label>2</label>
    </ligand>
</feature>
<feature type="binding site" evidence="1">
    <location>
        <position position="231"/>
    </location>
    <ligand>
        <name>Mg(2+)</name>
        <dbReference type="ChEBI" id="CHEBI:18420"/>
        <label>2</label>
    </ligand>
</feature>
<feature type="binding site" evidence="1">
    <location>
        <position position="252"/>
    </location>
    <ligand>
        <name>substrate</name>
    </ligand>
</feature>